<proteinExistence type="inferred from homology"/>
<name>CYB_SMIOO</name>
<organism>
    <name type="scientific">Sminthopsis ooldea</name>
    <name type="common">Ooldea dunnart</name>
    <dbReference type="NCBI Taxonomy" id="90765"/>
    <lineage>
        <taxon>Eukaryota</taxon>
        <taxon>Metazoa</taxon>
        <taxon>Chordata</taxon>
        <taxon>Craniata</taxon>
        <taxon>Vertebrata</taxon>
        <taxon>Euteleostomi</taxon>
        <taxon>Mammalia</taxon>
        <taxon>Metatheria</taxon>
        <taxon>Dasyuromorphia</taxon>
        <taxon>Dasyuridae</taxon>
        <taxon>Sminthopsis</taxon>
    </lineage>
</organism>
<geneLocation type="mitochondrion"/>
<accession>Q9XP77</accession>
<gene>
    <name type="primary">MT-CYB</name>
    <name type="synonym">COB</name>
    <name type="synonym">CYTB</name>
    <name type="synonym">MTCYB</name>
</gene>
<keyword id="KW-0249">Electron transport</keyword>
<keyword id="KW-0349">Heme</keyword>
<keyword id="KW-0408">Iron</keyword>
<keyword id="KW-0472">Membrane</keyword>
<keyword id="KW-0479">Metal-binding</keyword>
<keyword id="KW-0496">Mitochondrion</keyword>
<keyword id="KW-0999">Mitochondrion inner membrane</keyword>
<keyword id="KW-0679">Respiratory chain</keyword>
<keyword id="KW-0812">Transmembrane</keyword>
<keyword id="KW-1133">Transmembrane helix</keyword>
<keyword id="KW-0813">Transport</keyword>
<keyword id="KW-0830">Ubiquinone</keyword>
<reference key="1">
    <citation type="journal article" date="1999" name="Mol. Phylogenet. Evol.">
        <title>Systematic relationships within the dasyurid marsupial tribe Sminthopsini -- a multigene approach.</title>
        <authorList>
            <person name="Blacket M.J."/>
            <person name="Krajewski C."/>
            <person name="Labrinidis A."/>
            <person name="Cambron B."/>
            <person name="Cooper S."/>
            <person name="Westerman M."/>
        </authorList>
    </citation>
    <scope>NUCLEOTIDE SEQUENCE [GENOMIC DNA]</scope>
</reference>
<feature type="chain" id="PRO_0000061546" description="Cytochrome b">
    <location>
        <begin position="1"/>
        <end position="381"/>
    </location>
</feature>
<feature type="transmembrane region" description="Helical" evidence="2">
    <location>
        <begin position="33"/>
        <end position="53"/>
    </location>
</feature>
<feature type="transmembrane region" description="Helical" evidence="2">
    <location>
        <begin position="77"/>
        <end position="98"/>
    </location>
</feature>
<feature type="transmembrane region" description="Helical" evidence="2">
    <location>
        <begin position="113"/>
        <end position="133"/>
    </location>
</feature>
<feature type="transmembrane region" description="Helical" evidence="2">
    <location>
        <begin position="178"/>
        <end position="198"/>
    </location>
</feature>
<feature type="transmembrane region" description="Helical" evidence="2">
    <location>
        <begin position="226"/>
        <end position="246"/>
    </location>
</feature>
<feature type="transmembrane region" description="Helical" evidence="2">
    <location>
        <begin position="288"/>
        <end position="308"/>
    </location>
</feature>
<feature type="transmembrane region" description="Helical" evidence="2">
    <location>
        <begin position="320"/>
        <end position="340"/>
    </location>
</feature>
<feature type="transmembrane region" description="Helical" evidence="2">
    <location>
        <begin position="347"/>
        <end position="367"/>
    </location>
</feature>
<feature type="binding site" description="axial binding residue" evidence="2">
    <location>
        <position position="83"/>
    </location>
    <ligand>
        <name>heme b</name>
        <dbReference type="ChEBI" id="CHEBI:60344"/>
        <label>b562</label>
    </ligand>
    <ligandPart>
        <name>Fe</name>
        <dbReference type="ChEBI" id="CHEBI:18248"/>
    </ligandPart>
</feature>
<feature type="binding site" description="axial binding residue" evidence="2">
    <location>
        <position position="97"/>
    </location>
    <ligand>
        <name>heme b</name>
        <dbReference type="ChEBI" id="CHEBI:60344"/>
        <label>b566</label>
    </ligand>
    <ligandPart>
        <name>Fe</name>
        <dbReference type="ChEBI" id="CHEBI:18248"/>
    </ligandPart>
</feature>
<feature type="binding site" description="axial binding residue" evidence="2">
    <location>
        <position position="182"/>
    </location>
    <ligand>
        <name>heme b</name>
        <dbReference type="ChEBI" id="CHEBI:60344"/>
        <label>b562</label>
    </ligand>
    <ligandPart>
        <name>Fe</name>
        <dbReference type="ChEBI" id="CHEBI:18248"/>
    </ligandPart>
</feature>
<feature type="binding site" description="axial binding residue" evidence="2">
    <location>
        <position position="196"/>
    </location>
    <ligand>
        <name>heme b</name>
        <dbReference type="ChEBI" id="CHEBI:60344"/>
        <label>b566</label>
    </ligand>
    <ligandPart>
        <name>Fe</name>
        <dbReference type="ChEBI" id="CHEBI:18248"/>
    </ligandPart>
</feature>
<feature type="binding site" evidence="2">
    <location>
        <position position="201"/>
    </location>
    <ligand>
        <name>a ubiquinone</name>
        <dbReference type="ChEBI" id="CHEBI:16389"/>
    </ligand>
</feature>
<comment type="function">
    <text evidence="2">Component of the ubiquinol-cytochrome c reductase complex (complex III or cytochrome b-c1 complex) that is part of the mitochondrial respiratory chain. The b-c1 complex mediates electron transfer from ubiquinol to cytochrome c. Contributes to the generation of a proton gradient across the mitochondrial membrane that is then used for ATP synthesis.</text>
</comment>
<comment type="cofactor">
    <cofactor evidence="2">
        <name>heme b</name>
        <dbReference type="ChEBI" id="CHEBI:60344"/>
    </cofactor>
    <text evidence="2">Binds 2 heme b groups non-covalently.</text>
</comment>
<comment type="subunit">
    <text evidence="2">The cytochrome bc1 complex contains 11 subunits: 3 respiratory subunits (MT-CYB, CYC1 and UQCRFS1), 2 core proteins (UQCRC1 and UQCRC2) and 6 low-molecular weight proteins (UQCRH/QCR6, UQCRB/QCR7, UQCRQ/QCR8, UQCR10/QCR9, UQCR11/QCR10 and a cleavage product of UQCRFS1). This cytochrome bc1 complex then forms a dimer.</text>
</comment>
<comment type="subcellular location">
    <subcellularLocation>
        <location evidence="2">Mitochondrion inner membrane</location>
        <topology evidence="2">Multi-pass membrane protein</topology>
    </subcellularLocation>
</comment>
<comment type="miscellaneous">
    <text evidence="1">Heme 1 (or BL or b562) is low-potential and absorbs at about 562 nm, and heme 2 (or BH or b566) is high-potential and absorbs at about 566 nm.</text>
</comment>
<comment type="similarity">
    <text evidence="3 4">Belongs to the cytochrome b family.</text>
</comment>
<comment type="caution">
    <text evidence="2">The full-length protein contains only eight transmembrane helices, not nine as predicted by bioinformatics tools.</text>
</comment>
<protein>
    <recommendedName>
        <fullName>Cytochrome b</fullName>
    </recommendedName>
    <alternativeName>
        <fullName>Complex III subunit 3</fullName>
    </alternativeName>
    <alternativeName>
        <fullName>Complex III subunit III</fullName>
    </alternativeName>
    <alternativeName>
        <fullName>Cytochrome b-c1 complex subunit 3</fullName>
    </alternativeName>
    <alternativeName>
        <fullName>Ubiquinol-cytochrome-c reductase complex cytochrome b subunit</fullName>
    </alternativeName>
</protein>
<sequence length="381" mass="42908">MINLRKTHPLMKIINHSFIDLPAPSNISAWWNFGSLLGICLVIQILTGLFLAMHYTSDTLTAFSSVAHICRDVNYGWLIRNLHANGASMFFMCLFLHVGRGIYYGSYLYKETWNIGVILLLTVMATAFVGYVLPWGQMSFWGATVITNLFSAIPYIGQTLVEWAWGGFSVDKTTLTRFFALHFLLPFVIAGLTLVHLTFLHETGSNNPLGIPSDCDKIPFHPYYSIKDILGLMFLLLVLLSLALFSPDLLGDPDNFSPANPLNTPPHIKPEWYFLFAYAILRSIPNKLGGVLALLASILILLIIPFLHTANQRSMMFRPISQTLFWILTANLMTLTWIGGQPVEQPFIIIGQLASILYFLLILVLMPLAGMFENYMLKPKR</sequence>
<dbReference type="EMBL" id="AF088931">
    <property type="protein sequence ID" value="AAD38441.1"/>
    <property type="molecule type" value="Genomic_DNA"/>
</dbReference>
<dbReference type="SMR" id="Q9XP77"/>
<dbReference type="GO" id="GO:0005743">
    <property type="term" value="C:mitochondrial inner membrane"/>
    <property type="evidence" value="ECO:0007669"/>
    <property type="project" value="UniProtKB-SubCell"/>
</dbReference>
<dbReference type="GO" id="GO:0045275">
    <property type="term" value="C:respiratory chain complex III"/>
    <property type="evidence" value="ECO:0007669"/>
    <property type="project" value="InterPro"/>
</dbReference>
<dbReference type="GO" id="GO:0046872">
    <property type="term" value="F:metal ion binding"/>
    <property type="evidence" value="ECO:0007669"/>
    <property type="project" value="UniProtKB-KW"/>
</dbReference>
<dbReference type="GO" id="GO:0008121">
    <property type="term" value="F:ubiquinol-cytochrome-c reductase activity"/>
    <property type="evidence" value="ECO:0007669"/>
    <property type="project" value="InterPro"/>
</dbReference>
<dbReference type="GO" id="GO:0006122">
    <property type="term" value="P:mitochondrial electron transport, ubiquinol to cytochrome c"/>
    <property type="evidence" value="ECO:0007669"/>
    <property type="project" value="TreeGrafter"/>
</dbReference>
<dbReference type="CDD" id="cd00290">
    <property type="entry name" value="cytochrome_b_C"/>
    <property type="match status" value="1"/>
</dbReference>
<dbReference type="CDD" id="cd00284">
    <property type="entry name" value="Cytochrome_b_N"/>
    <property type="match status" value="1"/>
</dbReference>
<dbReference type="FunFam" id="1.20.810.10:FF:000002">
    <property type="entry name" value="Cytochrome b"/>
    <property type="match status" value="1"/>
</dbReference>
<dbReference type="Gene3D" id="1.20.810.10">
    <property type="entry name" value="Cytochrome Bc1 Complex, Chain C"/>
    <property type="match status" value="1"/>
</dbReference>
<dbReference type="InterPro" id="IPR005798">
    <property type="entry name" value="Cyt_b/b6_C"/>
</dbReference>
<dbReference type="InterPro" id="IPR036150">
    <property type="entry name" value="Cyt_b/b6_C_sf"/>
</dbReference>
<dbReference type="InterPro" id="IPR005797">
    <property type="entry name" value="Cyt_b/b6_N"/>
</dbReference>
<dbReference type="InterPro" id="IPR027387">
    <property type="entry name" value="Cytb/b6-like_sf"/>
</dbReference>
<dbReference type="InterPro" id="IPR030689">
    <property type="entry name" value="Cytochrome_b"/>
</dbReference>
<dbReference type="InterPro" id="IPR048260">
    <property type="entry name" value="Cytochrome_b_C_euk/bac"/>
</dbReference>
<dbReference type="InterPro" id="IPR048259">
    <property type="entry name" value="Cytochrome_b_N_euk/bac"/>
</dbReference>
<dbReference type="InterPro" id="IPR016174">
    <property type="entry name" value="Di-haem_cyt_TM"/>
</dbReference>
<dbReference type="PANTHER" id="PTHR19271">
    <property type="entry name" value="CYTOCHROME B"/>
    <property type="match status" value="1"/>
</dbReference>
<dbReference type="PANTHER" id="PTHR19271:SF16">
    <property type="entry name" value="CYTOCHROME B"/>
    <property type="match status" value="1"/>
</dbReference>
<dbReference type="Pfam" id="PF00032">
    <property type="entry name" value="Cytochrom_B_C"/>
    <property type="match status" value="1"/>
</dbReference>
<dbReference type="Pfam" id="PF00033">
    <property type="entry name" value="Cytochrome_B"/>
    <property type="match status" value="1"/>
</dbReference>
<dbReference type="PIRSF" id="PIRSF038885">
    <property type="entry name" value="COB"/>
    <property type="match status" value="1"/>
</dbReference>
<dbReference type="SUPFAM" id="SSF81648">
    <property type="entry name" value="a domain/subunit of cytochrome bc1 complex (Ubiquinol-cytochrome c reductase)"/>
    <property type="match status" value="1"/>
</dbReference>
<dbReference type="SUPFAM" id="SSF81342">
    <property type="entry name" value="Transmembrane di-heme cytochromes"/>
    <property type="match status" value="1"/>
</dbReference>
<dbReference type="PROSITE" id="PS51003">
    <property type="entry name" value="CYTB_CTER"/>
    <property type="match status" value="1"/>
</dbReference>
<dbReference type="PROSITE" id="PS51002">
    <property type="entry name" value="CYTB_NTER"/>
    <property type="match status" value="1"/>
</dbReference>
<evidence type="ECO:0000250" key="1"/>
<evidence type="ECO:0000250" key="2">
    <source>
        <dbReference type="UniProtKB" id="P00157"/>
    </source>
</evidence>
<evidence type="ECO:0000255" key="3">
    <source>
        <dbReference type="PROSITE-ProRule" id="PRU00967"/>
    </source>
</evidence>
<evidence type="ECO:0000255" key="4">
    <source>
        <dbReference type="PROSITE-ProRule" id="PRU00968"/>
    </source>
</evidence>